<gene>
    <name evidence="1" type="primary">nagB</name>
    <name type="ordered locus">YpAngola_A0338</name>
</gene>
<feature type="chain" id="PRO_1000139802" description="Glucosamine-6-phosphate deaminase">
    <location>
        <begin position="1"/>
        <end position="266"/>
    </location>
</feature>
<feature type="active site" description="Proton acceptor; for enolization step" evidence="1">
    <location>
        <position position="72"/>
    </location>
</feature>
<feature type="active site" description="For ring-opening step" evidence="1">
    <location>
        <position position="141"/>
    </location>
</feature>
<feature type="active site" description="Proton acceptor; for ring-opening step" evidence="1">
    <location>
        <position position="143"/>
    </location>
</feature>
<feature type="active site" description="For ring-opening step" evidence="1">
    <location>
        <position position="148"/>
    </location>
</feature>
<feature type="site" description="Part of the allosteric site" evidence="1">
    <location>
        <position position="151"/>
    </location>
</feature>
<feature type="site" description="Part of the allosteric site" evidence="1">
    <location>
        <position position="158"/>
    </location>
</feature>
<feature type="site" description="Part of the allosteric site" evidence="1">
    <location>
        <position position="160"/>
    </location>
</feature>
<feature type="site" description="Part of the allosteric site" evidence="1">
    <location>
        <position position="161"/>
    </location>
</feature>
<feature type="site" description="Part of the allosteric site" evidence="1">
    <location>
        <position position="254"/>
    </location>
</feature>
<comment type="function">
    <text evidence="1">Catalyzes the reversible isomerization-deamination of glucosamine 6-phosphate (GlcN6P) to form fructose 6-phosphate (Fru6P) and ammonium ion.</text>
</comment>
<comment type="catalytic activity">
    <reaction evidence="1">
        <text>alpha-D-glucosamine 6-phosphate + H2O = beta-D-fructose 6-phosphate + NH4(+)</text>
        <dbReference type="Rhea" id="RHEA:12172"/>
        <dbReference type="ChEBI" id="CHEBI:15377"/>
        <dbReference type="ChEBI" id="CHEBI:28938"/>
        <dbReference type="ChEBI" id="CHEBI:57634"/>
        <dbReference type="ChEBI" id="CHEBI:75989"/>
        <dbReference type="EC" id="3.5.99.6"/>
    </reaction>
</comment>
<comment type="activity regulation">
    <text evidence="1">Allosterically activated by N-acetylglucosamine 6-phosphate (GlcNAc6P).</text>
</comment>
<comment type="pathway">
    <text evidence="1">Amino-sugar metabolism; N-acetylneuraminate degradation; D-fructose 6-phosphate from N-acetylneuraminate: step 5/5.</text>
</comment>
<comment type="subunit">
    <text evidence="1">Homohexamer.</text>
</comment>
<comment type="similarity">
    <text evidence="1">Belongs to the glucosamine/galactosamine-6-phosphate isomerase family. NagB subfamily.</text>
</comment>
<organism>
    <name type="scientific">Yersinia pestis bv. Antiqua (strain Angola)</name>
    <dbReference type="NCBI Taxonomy" id="349746"/>
    <lineage>
        <taxon>Bacteria</taxon>
        <taxon>Pseudomonadati</taxon>
        <taxon>Pseudomonadota</taxon>
        <taxon>Gammaproteobacteria</taxon>
        <taxon>Enterobacterales</taxon>
        <taxon>Yersiniaceae</taxon>
        <taxon>Yersinia</taxon>
    </lineage>
</organism>
<sequence length="266" mass="29667">MRLIPLRNTAEVGKWAARHIVNRINAFKPTAERPFILGLPTGGTPMEAYKYLIAMHKAGEVSFKHVVTFNMDEYVGLPKEHPESYYTFMHTNFFDHVDIPAENINLLNGNAADIDAECRRYEEKIKSYGKIHLFMGGVGVDGHIAFNEPASSLASRTRIKTLTQETRIANSRFFGGDANLVPKYALTVGVGTLLDAEEVMILVTGHGKAQALQAAVEGSINHMWTISCLQLHAKAIMVCDEPSTMELKVKTVKYFRELEAENVKDL</sequence>
<evidence type="ECO:0000255" key="1">
    <source>
        <dbReference type="HAMAP-Rule" id="MF_01241"/>
    </source>
</evidence>
<keyword id="KW-0021">Allosteric enzyme</keyword>
<keyword id="KW-0119">Carbohydrate metabolism</keyword>
<keyword id="KW-0378">Hydrolase</keyword>
<proteinExistence type="inferred from homology"/>
<dbReference type="EC" id="3.5.99.6" evidence="1"/>
<dbReference type="EMBL" id="CP000901">
    <property type="protein sequence ID" value="ABX85065.1"/>
    <property type="molecule type" value="Genomic_DNA"/>
</dbReference>
<dbReference type="RefSeq" id="WP_002210352.1">
    <property type="nucleotide sequence ID" value="NZ_CP009935.1"/>
</dbReference>
<dbReference type="SMR" id="A9R7S4"/>
<dbReference type="GeneID" id="57976064"/>
<dbReference type="KEGG" id="ypg:YpAngola_A0338"/>
<dbReference type="PATRIC" id="fig|349746.12.peg.1287"/>
<dbReference type="UniPathway" id="UPA00629">
    <property type="reaction ID" value="UER00684"/>
</dbReference>
<dbReference type="GO" id="GO:0005737">
    <property type="term" value="C:cytoplasm"/>
    <property type="evidence" value="ECO:0007669"/>
    <property type="project" value="TreeGrafter"/>
</dbReference>
<dbReference type="GO" id="GO:0004342">
    <property type="term" value="F:glucosamine-6-phosphate deaminase activity"/>
    <property type="evidence" value="ECO:0007669"/>
    <property type="project" value="UniProtKB-UniRule"/>
</dbReference>
<dbReference type="GO" id="GO:0042802">
    <property type="term" value="F:identical protein binding"/>
    <property type="evidence" value="ECO:0007669"/>
    <property type="project" value="TreeGrafter"/>
</dbReference>
<dbReference type="GO" id="GO:0005975">
    <property type="term" value="P:carbohydrate metabolic process"/>
    <property type="evidence" value="ECO:0007669"/>
    <property type="project" value="InterPro"/>
</dbReference>
<dbReference type="GO" id="GO:0006043">
    <property type="term" value="P:glucosamine catabolic process"/>
    <property type="evidence" value="ECO:0007669"/>
    <property type="project" value="TreeGrafter"/>
</dbReference>
<dbReference type="GO" id="GO:0006046">
    <property type="term" value="P:N-acetylglucosamine catabolic process"/>
    <property type="evidence" value="ECO:0007669"/>
    <property type="project" value="TreeGrafter"/>
</dbReference>
<dbReference type="GO" id="GO:0019262">
    <property type="term" value="P:N-acetylneuraminate catabolic process"/>
    <property type="evidence" value="ECO:0007669"/>
    <property type="project" value="UniProtKB-UniRule"/>
</dbReference>
<dbReference type="CDD" id="cd01399">
    <property type="entry name" value="GlcN6P_deaminase"/>
    <property type="match status" value="1"/>
</dbReference>
<dbReference type="FunFam" id="3.40.50.1360:FF:000002">
    <property type="entry name" value="Glucosamine-6-phosphate deaminase"/>
    <property type="match status" value="1"/>
</dbReference>
<dbReference type="Gene3D" id="3.40.50.1360">
    <property type="match status" value="1"/>
</dbReference>
<dbReference type="HAMAP" id="MF_01241">
    <property type="entry name" value="GlcN6P_deamin"/>
    <property type="match status" value="1"/>
</dbReference>
<dbReference type="InterPro" id="IPR006148">
    <property type="entry name" value="Glc/Gal-6P_isomerase"/>
</dbReference>
<dbReference type="InterPro" id="IPR004547">
    <property type="entry name" value="Glucosamine6P_isomerase"/>
</dbReference>
<dbReference type="InterPro" id="IPR018321">
    <property type="entry name" value="Glucosamine6P_isomerase_CS"/>
</dbReference>
<dbReference type="InterPro" id="IPR037171">
    <property type="entry name" value="NagB/RpiA_transferase-like"/>
</dbReference>
<dbReference type="NCBIfam" id="TIGR00502">
    <property type="entry name" value="nagB"/>
    <property type="match status" value="1"/>
</dbReference>
<dbReference type="NCBIfam" id="NF001685">
    <property type="entry name" value="PRK00443.1-5"/>
    <property type="match status" value="1"/>
</dbReference>
<dbReference type="PANTHER" id="PTHR11280">
    <property type="entry name" value="GLUCOSAMINE-6-PHOSPHATE ISOMERASE"/>
    <property type="match status" value="1"/>
</dbReference>
<dbReference type="PANTHER" id="PTHR11280:SF5">
    <property type="entry name" value="GLUCOSAMINE-6-PHOSPHATE ISOMERASE"/>
    <property type="match status" value="1"/>
</dbReference>
<dbReference type="Pfam" id="PF01182">
    <property type="entry name" value="Glucosamine_iso"/>
    <property type="match status" value="1"/>
</dbReference>
<dbReference type="SUPFAM" id="SSF100950">
    <property type="entry name" value="NagB/RpiA/CoA transferase-like"/>
    <property type="match status" value="1"/>
</dbReference>
<dbReference type="PROSITE" id="PS01161">
    <property type="entry name" value="GLC_GALNAC_ISOMERASE"/>
    <property type="match status" value="1"/>
</dbReference>
<reference key="1">
    <citation type="journal article" date="2010" name="J. Bacteriol.">
        <title>Genome sequence of the deep-rooted Yersinia pestis strain Angola reveals new insights into the evolution and pangenome of the plague bacterium.</title>
        <authorList>
            <person name="Eppinger M."/>
            <person name="Worsham P.L."/>
            <person name="Nikolich M.P."/>
            <person name="Riley D.R."/>
            <person name="Sebastian Y."/>
            <person name="Mou S."/>
            <person name="Achtman M."/>
            <person name="Lindler L.E."/>
            <person name="Ravel J."/>
        </authorList>
    </citation>
    <scope>NUCLEOTIDE SEQUENCE [LARGE SCALE GENOMIC DNA]</scope>
    <source>
        <strain>Angola</strain>
    </source>
</reference>
<name>NAGB_YERPG</name>
<accession>A9R7S4</accession>
<protein>
    <recommendedName>
        <fullName evidence="1">Glucosamine-6-phosphate deaminase</fullName>
        <ecNumber evidence="1">3.5.99.6</ecNumber>
    </recommendedName>
    <alternativeName>
        <fullName evidence="1">GlcN6P deaminase</fullName>
        <shortName evidence="1">GNPDA</shortName>
    </alternativeName>
    <alternativeName>
        <fullName evidence="1">Glucosamine-6-phosphate isomerase</fullName>
    </alternativeName>
</protein>